<dbReference type="EMBL" id="U73857">
    <property type="protein sequence ID" value="AAB18106.1"/>
    <property type="molecule type" value="Genomic_DNA"/>
</dbReference>
<dbReference type="EMBL" id="U00096">
    <property type="protein sequence ID" value="AAC73485.1"/>
    <property type="molecule type" value="Genomic_DNA"/>
</dbReference>
<dbReference type="EMBL" id="AP009048">
    <property type="protein sequence ID" value="BAE76163.1"/>
    <property type="molecule type" value="Genomic_DNA"/>
</dbReference>
<dbReference type="EMBL" id="M13345">
    <property type="status" value="NOT_ANNOTATED_CDS"/>
    <property type="molecule type" value="Genomic_DNA"/>
</dbReference>
<dbReference type="EMBL" id="AH000890">
    <property type="protein sequence ID" value="AAR23118.1"/>
    <property type="molecule type" value="Genomic_DNA"/>
</dbReference>
<dbReference type="PIR" id="F64766">
    <property type="entry name" value="F64766"/>
</dbReference>
<dbReference type="RefSeq" id="NP_414916.1">
    <property type="nucleotide sequence ID" value="NC_000913.3"/>
</dbReference>
<dbReference type="RefSeq" id="WP_000792970.1">
    <property type="nucleotide sequence ID" value="NZ_STEB01000007.1"/>
</dbReference>
<dbReference type="PDB" id="8GKV">
    <property type="method" value="X-ray"/>
    <property type="resolution" value="2.35 A"/>
    <property type="chains" value="A/B=1-86"/>
</dbReference>
<dbReference type="PDBsum" id="8GKV"/>
<dbReference type="SMR" id="P0AAN9"/>
<dbReference type="BioGRID" id="4261526">
    <property type="interactions" value="16"/>
</dbReference>
<dbReference type="BioGRID" id="852022">
    <property type="interactions" value="1"/>
</dbReference>
<dbReference type="DIP" id="DIP-48131N"/>
<dbReference type="FunCoup" id="P0AAN9">
    <property type="interactions" value="70"/>
</dbReference>
<dbReference type="IntAct" id="P0AAN9">
    <property type="interactions" value="8"/>
</dbReference>
<dbReference type="STRING" id="511145.b0382"/>
<dbReference type="jPOST" id="P0AAN9"/>
<dbReference type="PaxDb" id="511145-b0382"/>
<dbReference type="EnsemblBacteria" id="AAC73485">
    <property type="protein sequence ID" value="AAC73485"/>
    <property type="gene ID" value="b0382"/>
</dbReference>
<dbReference type="GeneID" id="93777080"/>
<dbReference type="GeneID" id="947709"/>
<dbReference type="KEGG" id="ecj:JW0373"/>
<dbReference type="KEGG" id="eco:b0382"/>
<dbReference type="KEGG" id="ecoc:C3026_01850"/>
<dbReference type="PATRIC" id="fig|1411691.4.peg.1896"/>
<dbReference type="EchoBASE" id="EB1236"/>
<dbReference type="eggNOG" id="ENOG5032SF1">
    <property type="taxonomic scope" value="Bacteria"/>
</dbReference>
<dbReference type="HOGENOM" id="CLU_169517_0_0_6"/>
<dbReference type="InParanoid" id="P0AAN9"/>
<dbReference type="OMA" id="IDTAMIH"/>
<dbReference type="OrthoDB" id="6548574at2"/>
<dbReference type="PhylomeDB" id="P0AAN9"/>
<dbReference type="BioCyc" id="EcoCyc:EG11256-MONOMER"/>
<dbReference type="PRO" id="PR:P0AAN9"/>
<dbReference type="Proteomes" id="UP000000625">
    <property type="component" value="Chromosome"/>
</dbReference>
<dbReference type="GO" id="GO:0005737">
    <property type="term" value="C:cytoplasm"/>
    <property type="evidence" value="ECO:0007669"/>
    <property type="project" value="UniProtKB-SubCell"/>
</dbReference>
<dbReference type="GO" id="GO:0043856">
    <property type="term" value="F:anti-sigma factor antagonist activity"/>
    <property type="evidence" value="ECO:0000314"/>
    <property type="project" value="EcoCyc"/>
</dbReference>
<dbReference type="GO" id="GO:0016036">
    <property type="term" value="P:cellular response to phosphate starvation"/>
    <property type="evidence" value="ECO:0000315"/>
    <property type="project" value="EcoCyc"/>
</dbReference>
<dbReference type="GO" id="GO:0042177">
    <property type="term" value="P:negative regulation of protein catabolic process"/>
    <property type="evidence" value="ECO:0000314"/>
    <property type="project" value="EcoCyc"/>
</dbReference>
<dbReference type="HAMAP" id="MF_01198">
    <property type="entry name" value="Anti_adapt_IraP"/>
    <property type="match status" value="1"/>
</dbReference>
<dbReference type="InterPro" id="IPR019732">
    <property type="entry name" value="SigmaS_Anti-adapt_IraP"/>
</dbReference>
<dbReference type="NCBIfam" id="NF007598">
    <property type="entry name" value="PRK10244.1"/>
    <property type="match status" value="1"/>
</dbReference>
<dbReference type="Pfam" id="PF10796">
    <property type="entry name" value="Anti-adapt_IraP"/>
    <property type="match status" value="1"/>
</dbReference>
<keyword id="KW-0002">3D-structure</keyword>
<keyword id="KW-0175">Coiled coil</keyword>
<keyword id="KW-0963">Cytoplasm</keyword>
<keyword id="KW-1185">Reference proteome</keyword>
<keyword id="KW-0346">Stress response</keyword>
<protein>
    <recommendedName>
        <fullName>Anti-adapter protein IraP</fullName>
    </recommendedName>
</protein>
<name>IRAP_ECOLI</name>
<feature type="chain" id="PRO_0000168585" description="Anti-adapter protein IraP">
    <location>
        <begin position="1"/>
        <end position="86"/>
    </location>
</feature>
<feature type="coiled-coil region" evidence="1">
    <location>
        <begin position="1"/>
        <end position="36"/>
    </location>
</feature>
<feature type="mutagenesis site" description="Loss of ability to interact with RssB." evidence="2">
    <original>L</original>
    <variation>S</variation>
    <location>
        <position position="9"/>
    </location>
</feature>
<organism>
    <name type="scientific">Escherichia coli (strain K12)</name>
    <dbReference type="NCBI Taxonomy" id="83333"/>
    <lineage>
        <taxon>Bacteria</taxon>
        <taxon>Pseudomonadati</taxon>
        <taxon>Pseudomonadota</taxon>
        <taxon>Gammaproteobacteria</taxon>
        <taxon>Enterobacterales</taxon>
        <taxon>Enterobacteriaceae</taxon>
        <taxon>Escherichia</taxon>
    </lineage>
</organism>
<sequence length="86" mass="9937">MKNLIAELLFKLAQKEEESKELCAQVEALEIIVTAMLRNMAQNDQQRLIDQVEGALYEVKPDASIPDDDTELLRDYVKKLLKHPRQ</sequence>
<gene>
    <name type="primary">iraP</name>
    <name type="synonym">yaiB</name>
    <name type="ordered locus">b0382</name>
    <name type="ordered locus">JW0373</name>
</gene>
<proteinExistence type="evidence at protein level"/>
<evidence type="ECO:0000255" key="1"/>
<evidence type="ECO:0000269" key="2">
    <source>
    </source>
</evidence>
<evidence type="ECO:0000269" key="3">
    <source>
    </source>
</evidence>
<evidence type="ECO:0000269" key="4">
    <source>
    </source>
</evidence>
<evidence type="ECO:0000305" key="5"/>
<reference key="1">
    <citation type="submission" date="1997-01" db="EMBL/GenBank/DDBJ databases">
        <title>Sequence of minutes 4-25 of Escherichia coli.</title>
        <authorList>
            <person name="Chung E."/>
            <person name="Allen E."/>
            <person name="Araujo R."/>
            <person name="Aparicio A.M."/>
            <person name="Davis K."/>
            <person name="Duncan M."/>
            <person name="Federspiel N."/>
            <person name="Hyman R."/>
            <person name="Kalman S."/>
            <person name="Komp C."/>
            <person name="Kurdi O."/>
            <person name="Lew H."/>
            <person name="Lin D."/>
            <person name="Namath A."/>
            <person name="Oefner P."/>
            <person name="Roberts D."/>
            <person name="Schramm S."/>
            <person name="Davis R.W."/>
        </authorList>
    </citation>
    <scope>NUCLEOTIDE SEQUENCE [LARGE SCALE GENOMIC DNA]</scope>
    <source>
        <strain>K12 / MG1655 / ATCC 47076</strain>
    </source>
</reference>
<reference key="2">
    <citation type="journal article" date="1997" name="Science">
        <title>The complete genome sequence of Escherichia coli K-12.</title>
        <authorList>
            <person name="Blattner F.R."/>
            <person name="Plunkett G. III"/>
            <person name="Bloch C.A."/>
            <person name="Perna N.T."/>
            <person name="Burland V."/>
            <person name="Riley M."/>
            <person name="Collado-Vides J."/>
            <person name="Glasner J.D."/>
            <person name="Rode C.K."/>
            <person name="Mayhew G.F."/>
            <person name="Gregor J."/>
            <person name="Davis N.W."/>
            <person name="Kirkpatrick H.A."/>
            <person name="Goeden M.A."/>
            <person name="Rose D.J."/>
            <person name="Mau B."/>
            <person name="Shao Y."/>
        </authorList>
    </citation>
    <scope>NUCLEOTIDE SEQUENCE [LARGE SCALE GENOMIC DNA]</scope>
    <source>
        <strain>K12 / MG1655 / ATCC 47076</strain>
    </source>
</reference>
<reference key="3">
    <citation type="journal article" date="2006" name="Mol. Syst. Biol.">
        <title>Highly accurate genome sequences of Escherichia coli K-12 strains MG1655 and W3110.</title>
        <authorList>
            <person name="Hayashi K."/>
            <person name="Morooka N."/>
            <person name="Yamamoto Y."/>
            <person name="Fujita K."/>
            <person name="Isono K."/>
            <person name="Choi S."/>
            <person name="Ohtsubo E."/>
            <person name="Baba T."/>
            <person name="Wanner B.L."/>
            <person name="Mori H."/>
            <person name="Horiuchi T."/>
        </authorList>
    </citation>
    <scope>NUCLEOTIDE SEQUENCE [LARGE SCALE GENOMIC DNA]</scope>
    <source>
        <strain>K12 / W3110 / ATCC 27325 / DSM 5911</strain>
    </source>
</reference>
<reference key="4">
    <citation type="journal article" date="1986" name="Gene">
        <title>Nucleotide sequence of the alkaline phosphatase gene of Escherichia coli.</title>
        <authorList>
            <person name="Chang C.N."/>
            <person name="Kuang W.-J."/>
            <person name="Chen E.Y."/>
        </authorList>
    </citation>
    <scope>NUCLEOTIDE SEQUENCE [GENOMIC DNA] OF 28-86</scope>
    <source>
        <strain>294</strain>
    </source>
</reference>
<reference key="5">
    <citation type="journal article" date="1981" name="Nucleic Acids Res.">
        <title>The nucleotide sequence of the promoter and the amino-terminal region of alkaline phosphatase structural gene (phoA) of Escherichia coli.</title>
        <authorList>
            <person name="Kikuchi Y."/>
            <person name="Yoda K."/>
            <person name="Yamasaki M."/>
            <person name="Tamura G."/>
        </authorList>
    </citation>
    <scope>NUCLEOTIDE SEQUENCE [GENOMIC DNA] OF 28-86</scope>
    <source>
        <strain>K12</strain>
    </source>
</reference>
<reference key="6">
    <citation type="journal article" date="2006" name="Genes Dev.">
        <title>Modulating RssB activity: IraP, a novel regulator of sigma(S) stability in Escherichia coli.</title>
        <authorList>
            <person name="Bougdour A."/>
            <person name="Wickner S."/>
            <person name="Gottesman S."/>
        </authorList>
    </citation>
    <scope>FUNCTION AS INHIBITOR OF RSSB ACTIVITY</scope>
    <scope>INTERACTION WITH RSSB</scope>
    <scope>INDUCTION</scope>
    <scope>GENE NAME</scope>
    <scope>MUTAGENESIS OF LEU-9</scope>
    <source>
        <strain>K12 / MG1655 / ATCC 47076</strain>
    </source>
</reference>
<reference key="7">
    <citation type="journal article" date="2007" name="Proc. Natl. Acad. Sci. U.S.A.">
        <title>ppGpp regulation of RpoS degradation via anti-adaptor protein IraP.</title>
        <authorList>
            <person name="Bougdour A."/>
            <person name="Gottesman S."/>
        </authorList>
    </citation>
    <scope>INDUCTION BY PPGPP</scope>
    <source>
        <strain>K12 / MG1655 / ATCC 47076</strain>
    </source>
</reference>
<reference key="8">
    <citation type="journal article" date="2008" name="Mol. Microbiol.">
        <title>Multiple pathways for regulation of sigmaS (RpoS) stability in Escherichia coli via the action of multiple anti-adaptors.</title>
        <authorList>
            <person name="Bougdour A."/>
            <person name="Cunning C."/>
            <person name="Baptiste P.J."/>
            <person name="Elliott T."/>
            <person name="Gottesman S."/>
        </authorList>
    </citation>
    <scope>FUNCTION</scope>
    <source>
        <strain>K12 / MG1655 / ATCC 47076</strain>
    </source>
</reference>
<comment type="function">
    <text evidence="2 4">Inhibits RpoS proteolysis by regulating RssB activity, thereby increasing the stability of the sigma stress factor RpoS especially during phosphate starvation, but also in stationary phase and during nitrogen starvation. Its effect on RpoS stability is due to its interaction with RssB, which probably blocks the interaction of RssB with RpoS, and the consequent delivery of the RssB-RpoS complex to the ClpXP protein degradation pathway.</text>
</comment>
<comment type="subunit">
    <text evidence="2">Interacts with RssB.</text>
</comment>
<comment type="interaction">
    <interactant intactId="EBI-1116300">
        <id>P0AAN9</id>
    </interactant>
    <interactant intactId="EBI-1122979">
        <id>P0AEV1</id>
        <label>rssB</label>
    </interactant>
    <organismsDiffer>false</organismsDiffer>
    <experiments>3</experiments>
</comment>
<comment type="subcellular location">
    <subcellularLocation>
        <location evidence="5">Cytoplasm</location>
    </subcellularLocation>
</comment>
<comment type="induction">
    <text evidence="2 3">By phosphate and nitrogen starvation, and in stationary phase, via the alarmone ppGpp.</text>
</comment>
<comment type="similarity">
    <text evidence="5">Belongs to the IraP family.</text>
</comment>
<accession>P0AAN9</accession>
<accession>P21831</accession>
<accession>P77383</accession>
<accession>Q2MC43</accession>